<reference key="1">
    <citation type="submission" date="2008-05" db="EMBL/GenBank/DDBJ databases">
        <title>Complete sequence of Rhodopseudomonas palustris TIE-1.</title>
        <authorList>
            <consortium name="US DOE Joint Genome Institute"/>
            <person name="Lucas S."/>
            <person name="Copeland A."/>
            <person name="Lapidus A."/>
            <person name="Glavina del Rio T."/>
            <person name="Dalin E."/>
            <person name="Tice H."/>
            <person name="Pitluck S."/>
            <person name="Chain P."/>
            <person name="Malfatti S."/>
            <person name="Shin M."/>
            <person name="Vergez L."/>
            <person name="Lang D."/>
            <person name="Schmutz J."/>
            <person name="Larimer F."/>
            <person name="Land M."/>
            <person name="Hauser L."/>
            <person name="Kyrpides N."/>
            <person name="Mikhailova N."/>
            <person name="Emerson D."/>
            <person name="Newman D.K."/>
            <person name="Roden E."/>
            <person name="Richardson P."/>
        </authorList>
    </citation>
    <scope>NUCLEOTIDE SEQUENCE [LARGE SCALE GENOMIC DNA]</scope>
    <source>
        <strain>TIE-1</strain>
    </source>
</reference>
<keyword id="KW-0963">Cytoplasm</keyword>
<keyword id="KW-0342">GTP-binding</keyword>
<keyword id="KW-0378">Hydrolase</keyword>
<keyword id="KW-0460">Magnesium</keyword>
<keyword id="KW-0479">Metal-binding</keyword>
<keyword id="KW-0547">Nucleotide-binding</keyword>
<gene>
    <name evidence="1" type="primary">obg</name>
    <name type="ordered locus">Rpal_0157</name>
</gene>
<accession>B3Q731</accession>
<dbReference type="EC" id="3.6.5.-" evidence="1"/>
<dbReference type="EMBL" id="CP001096">
    <property type="protein sequence ID" value="ACE98719.1"/>
    <property type="molecule type" value="Genomic_DNA"/>
</dbReference>
<dbReference type="RefSeq" id="WP_012493955.1">
    <property type="nucleotide sequence ID" value="NC_011004.1"/>
</dbReference>
<dbReference type="SMR" id="B3Q731"/>
<dbReference type="KEGG" id="rpt:Rpal_0157"/>
<dbReference type="HOGENOM" id="CLU_011747_2_0_5"/>
<dbReference type="OrthoDB" id="9807318at2"/>
<dbReference type="Proteomes" id="UP000001725">
    <property type="component" value="Chromosome"/>
</dbReference>
<dbReference type="GO" id="GO:0005737">
    <property type="term" value="C:cytoplasm"/>
    <property type="evidence" value="ECO:0007669"/>
    <property type="project" value="UniProtKB-SubCell"/>
</dbReference>
<dbReference type="GO" id="GO:0005525">
    <property type="term" value="F:GTP binding"/>
    <property type="evidence" value="ECO:0007669"/>
    <property type="project" value="UniProtKB-UniRule"/>
</dbReference>
<dbReference type="GO" id="GO:0003924">
    <property type="term" value="F:GTPase activity"/>
    <property type="evidence" value="ECO:0007669"/>
    <property type="project" value="UniProtKB-UniRule"/>
</dbReference>
<dbReference type="GO" id="GO:0000287">
    <property type="term" value="F:magnesium ion binding"/>
    <property type="evidence" value="ECO:0007669"/>
    <property type="project" value="InterPro"/>
</dbReference>
<dbReference type="GO" id="GO:0042254">
    <property type="term" value="P:ribosome biogenesis"/>
    <property type="evidence" value="ECO:0007669"/>
    <property type="project" value="UniProtKB-UniRule"/>
</dbReference>
<dbReference type="CDD" id="cd01898">
    <property type="entry name" value="Obg"/>
    <property type="match status" value="1"/>
</dbReference>
<dbReference type="FunFam" id="2.70.210.12:FF:000001">
    <property type="entry name" value="GTPase Obg"/>
    <property type="match status" value="1"/>
</dbReference>
<dbReference type="Gene3D" id="2.70.210.12">
    <property type="entry name" value="GTP1/OBG domain"/>
    <property type="match status" value="1"/>
</dbReference>
<dbReference type="Gene3D" id="3.40.50.300">
    <property type="entry name" value="P-loop containing nucleotide triphosphate hydrolases"/>
    <property type="match status" value="1"/>
</dbReference>
<dbReference type="HAMAP" id="MF_01454">
    <property type="entry name" value="GTPase_Obg"/>
    <property type="match status" value="1"/>
</dbReference>
<dbReference type="InterPro" id="IPR031167">
    <property type="entry name" value="G_OBG"/>
</dbReference>
<dbReference type="InterPro" id="IPR006073">
    <property type="entry name" value="GTP-bd"/>
</dbReference>
<dbReference type="InterPro" id="IPR014100">
    <property type="entry name" value="GTP-bd_Obg/CgtA"/>
</dbReference>
<dbReference type="InterPro" id="IPR006074">
    <property type="entry name" value="GTP1-OBG_CS"/>
</dbReference>
<dbReference type="InterPro" id="IPR006169">
    <property type="entry name" value="GTP1_OBG_dom"/>
</dbReference>
<dbReference type="InterPro" id="IPR036726">
    <property type="entry name" value="GTP1_OBG_dom_sf"/>
</dbReference>
<dbReference type="InterPro" id="IPR045086">
    <property type="entry name" value="OBG_GTPase"/>
</dbReference>
<dbReference type="InterPro" id="IPR027417">
    <property type="entry name" value="P-loop_NTPase"/>
</dbReference>
<dbReference type="NCBIfam" id="TIGR02729">
    <property type="entry name" value="Obg_CgtA"/>
    <property type="match status" value="1"/>
</dbReference>
<dbReference type="NCBIfam" id="NF008955">
    <property type="entry name" value="PRK12297.1"/>
    <property type="match status" value="1"/>
</dbReference>
<dbReference type="NCBIfam" id="NF008956">
    <property type="entry name" value="PRK12299.1"/>
    <property type="match status" value="1"/>
</dbReference>
<dbReference type="PANTHER" id="PTHR11702">
    <property type="entry name" value="DEVELOPMENTALLY REGULATED GTP-BINDING PROTEIN-RELATED"/>
    <property type="match status" value="1"/>
</dbReference>
<dbReference type="PANTHER" id="PTHR11702:SF31">
    <property type="entry name" value="MITOCHONDRIAL RIBOSOME-ASSOCIATED GTPASE 2"/>
    <property type="match status" value="1"/>
</dbReference>
<dbReference type="Pfam" id="PF01018">
    <property type="entry name" value="GTP1_OBG"/>
    <property type="match status" value="1"/>
</dbReference>
<dbReference type="Pfam" id="PF01926">
    <property type="entry name" value="MMR_HSR1"/>
    <property type="match status" value="1"/>
</dbReference>
<dbReference type="PIRSF" id="PIRSF002401">
    <property type="entry name" value="GTP_bd_Obg/CgtA"/>
    <property type="match status" value="1"/>
</dbReference>
<dbReference type="PRINTS" id="PR00326">
    <property type="entry name" value="GTP1OBG"/>
</dbReference>
<dbReference type="SUPFAM" id="SSF82051">
    <property type="entry name" value="Obg GTP-binding protein N-terminal domain"/>
    <property type="match status" value="1"/>
</dbReference>
<dbReference type="SUPFAM" id="SSF52540">
    <property type="entry name" value="P-loop containing nucleoside triphosphate hydrolases"/>
    <property type="match status" value="1"/>
</dbReference>
<dbReference type="PROSITE" id="PS51710">
    <property type="entry name" value="G_OBG"/>
    <property type="match status" value="1"/>
</dbReference>
<dbReference type="PROSITE" id="PS00905">
    <property type="entry name" value="GTP1_OBG"/>
    <property type="match status" value="1"/>
</dbReference>
<dbReference type="PROSITE" id="PS51883">
    <property type="entry name" value="OBG"/>
    <property type="match status" value="1"/>
</dbReference>
<sequence>MKFLDEAKVYIRSGDGGNGCVAFRREKFIEFGGPNGGNGGRGGDIIVEAADGLNTLIDYRYQQHFKAQKGGNGMGSDRHGAGGKDIVMKVPVGTQIFDEDKETLIHDFTKVGERFVLAKGGNGGFGNAHFKSSTNRAPRHANPGLPGEERWIWLRLKLIADAGLVGLPNAGKSTFLSKVSAAKPKIADYPFTTLHPQLGVVNSDGREFVLADIPGLIEGAHEGAGLGDRFLGHIERCRVLLHLIDATCEHAGKAYKTVRGELEAYAETLVDKIEIVALNKIDAVEPDELKKQKDRLKRAAKKTPLLLSGVTGQGVPEVLRALVAVIGEAPVSDKAIGTADNPAEAKPWAPQDA</sequence>
<evidence type="ECO:0000255" key="1">
    <source>
        <dbReference type="HAMAP-Rule" id="MF_01454"/>
    </source>
</evidence>
<evidence type="ECO:0000255" key="2">
    <source>
        <dbReference type="PROSITE-ProRule" id="PRU01231"/>
    </source>
</evidence>
<protein>
    <recommendedName>
        <fullName evidence="1">GTPase Obg</fullName>
        <ecNumber evidence="1">3.6.5.-</ecNumber>
    </recommendedName>
    <alternativeName>
        <fullName evidence="1">GTP-binding protein Obg</fullName>
    </alternativeName>
</protein>
<organism>
    <name type="scientific">Rhodopseudomonas palustris (strain TIE-1)</name>
    <dbReference type="NCBI Taxonomy" id="395960"/>
    <lineage>
        <taxon>Bacteria</taxon>
        <taxon>Pseudomonadati</taxon>
        <taxon>Pseudomonadota</taxon>
        <taxon>Alphaproteobacteria</taxon>
        <taxon>Hyphomicrobiales</taxon>
        <taxon>Nitrobacteraceae</taxon>
        <taxon>Rhodopseudomonas</taxon>
    </lineage>
</organism>
<name>OBG_RHOPT</name>
<proteinExistence type="inferred from homology"/>
<comment type="function">
    <text evidence="1">An essential GTPase which binds GTP, GDP and possibly (p)ppGpp with moderate affinity, with high nucleotide exchange rates and a fairly low GTP hydrolysis rate. Plays a role in control of the cell cycle, stress response, ribosome biogenesis and in those bacteria that undergo differentiation, in morphogenesis control.</text>
</comment>
<comment type="cofactor">
    <cofactor evidence="1">
        <name>Mg(2+)</name>
        <dbReference type="ChEBI" id="CHEBI:18420"/>
    </cofactor>
</comment>
<comment type="subunit">
    <text evidence="1">Monomer.</text>
</comment>
<comment type="subcellular location">
    <subcellularLocation>
        <location evidence="1">Cytoplasm</location>
    </subcellularLocation>
</comment>
<comment type="similarity">
    <text evidence="1">Belongs to the TRAFAC class OBG-HflX-like GTPase superfamily. OBG GTPase family.</text>
</comment>
<feature type="chain" id="PRO_0000386195" description="GTPase Obg">
    <location>
        <begin position="1"/>
        <end position="353"/>
    </location>
</feature>
<feature type="domain" description="Obg" evidence="2">
    <location>
        <begin position="1"/>
        <end position="159"/>
    </location>
</feature>
<feature type="domain" description="OBG-type G" evidence="1">
    <location>
        <begin position="160"/>
        <end position="327"/>
    </location>
</feature>
<feature type="binding site" evidence="1">
    <location>
        <begin position="166"/>
        <end position="173"/>
    </location>
    <ligand>
        <name>GTP</name>
        <dbReference type="ChEBI" id="CHEBI:37565"/>
    </ligand>
</feature>
<feature type="binding site" evidence="1">
    <location>
        <position position="173"/>
    </location>
    <ligand>
        <name>Mg(2+)</name>
        <dbReference type="ChEBI" id="CHEBI:18420"/>
    </ligand>
</feature>
<feature type="binding site" evidence="1">
    <location>
        <begin position="191"/>
        <end position="195"/>
    </location>
    <ligand>
        <name>GTP</name>
        <dbReference type="ChEBI" id="CHEBI:37565"/>
    </ligand>
</feature>
<feature type="binding site" evidence="1">
    <location>
        <position position="193"/>
    </location>
    <ligand>
        <name>Mg(2+)</name>
        <dbReference type="ChEBI" id="CHEBI:18420"/>
    </ligand>
</feature>
<feature type="binding site" evidence="1">
    <location>
        <begin position="212"/>
        <end position="215"/>
    </location>
    <ligand>
        <name>GTP</name>
        <dbReference type="ChEBI" id="CHEBI:37565"/>
    </ligand>
</feature>
<feature type="binding site" evidence="1">
    <location>
        <begin position="279"/>
        <end position="282"/>
    </location>
    <ligand>
        <name>GTP</name>
        <dbReference type="ChEBI" id="CHEBI:37565"/>
    </ligand>
</feature>
<feature type="binding site" evidence="1">
    <location>
        <begin position="308"/>
        <end position="310"/>
    </location>
    <ligand>
        <name>GTP</name>
        <dbReference type="ChEBI" id="CHEBI:37565"/>
    </ligand>
</feature>